<name>GUAA_FINM2</name>
<keyword id="KW-0067">ATP-binding</keyword>
<keyword id="KW-0315">Glutamine amidotransferase</keyword>
<keyword id="KW-0332">GMP biosynthesis</keyword>
<keyword id="KW-0436">Ligase</keyword>
<keyword id="KW-0547">Nucleotide-binding</keyword>
<keyword id="KW-0658">Purine biosynthesis</keyword>
<keyword id="KW-1185">Reference proteome</keyword>
<gene>
    <name evidence="1" type="primary">guaA</name>
    <name type="ordered locus">FMG_0314</name>
</gene>
<accession>B0S0S7</accession>
<evidence type="ECO:0000255" key="1">
    <source>
        <dbReference type="HAMAP-Rule" id="MF_00344"/>
    </source>
</evidence>
<organism>
    <name type="scientific">Finegoldia magna (strain ATCC 29328 / DSM 20472 / WAL 2508)</name>
    <name type="common">Peptostreptococcus magnus</name>
    <dbReference type="NCBI Taxonomy" id="334413"/>
    <lineage>
        <taxon>Bacteria</taxon>
        <taxon>Bacillati</taxon>
        <taxon>Bacillota</taxon>
        <taxon>Tissierellia</taxon>
        <taxon>Tissierellales</taxon>
        <taxon>Peptoniphilaceae</taxon>
        <taxon>Finegoldia</taxon>
    </lineage>
</organism>
<comment type="function">
    <text evidence="1">Catalyzes the synthesis of GMP from XMP.</text>
</comment>
<comment type="catalytic activity">
    <reaction evidence="1">
        <text>XMP + L-glutamine + ATP + H2O = GMP + L-glutamate + AMP + diphosphate + 2 H(+)</text>
        <dbReference type="Rhea" id="RHEA:11680"/>
        <dbReference type="ChEBI" id="CHEBI:15377"/>
        <dbReference type="ChEBI" id="CHEBI:15378"/>
        <dbReference type="ChEBI" id="CHEBI:29985"/>
        <dbReference type="ChEBI" id="CHEBI:30616"/>
        <dbReference type="ChEBI" id="CHEBI:33019"/>
        <dbReference type="ChEBI" id="CHEBI:57464"/>
        <dbReference type="ChEBI" id="CHEBI:58115"/>
        <dbReference type="ChEBI" id="CHEBI:58359"/>
        <dbReference type="ChEBI" id="CHEBI:456215"/>
        <dbReference type="EC" id="6.3.5.2"/>
    </reaction>
</comment>
<comment type="pathway">
    <text evidence="1">Purine metabolism; GMP biosynthesis; GMP from XMP (L-Gln route): step 1/1.</text>
</comment>
<comment type="subunit">
    <text evidence="1">Homodimer.</text>
</comment>
<feature type="chain" id="PRO_1000190240" description="GMP synthase [glutamine-hydrolyzing]">
    <location>
        <begin position="1"/>
        <end position="510"/>
    </location>
</feature>
<feature type="domain" description="Glutamine amidotransferase type-1" evidence="1">
    <location>
        <begin position="5"/>
        <end position="195"/>
    </location>
</feature>
<feature type="domain" description="GMPS ATP-PPase" evidence="1">
    <location>
        <begin position="196"/>
        <end position="385"/>
    </location>
</feature>
<feature type="active site" description="Nucleophile" evidence="1">
    <location>
        <position position="82"/>
    </location>
</feature>
<feature type="active site" evidence="1">
    <location>
        <position position="169"/>
    </location>
</feature>
<feature type="active site" evidence="1">
    <location>
        <position position="171"/>
    </location>
</feature>
<feature type="binding site" evidence="1">
    <location>
        <begin position="223"/>
        <end position="229"/>
    </location>
    <ligand>
        <name>ATP</name>
        <dbReference type="ChEBI" id="CHEBI:30616"/>
    </ligand>
</feature>
<reference key="1">
    <citation type="journal article" date="2008" name="DNA Res.">
        <title>Complete genome sequence of Finegoldia magna, an anaerobic opportunistic pathogen.</title>
        <authorList>
            <person name="Goto T."/>
            <person name="Yamashita A."/>
            <person name="Hirakawa H."/>
            <person name="Matsutani M."/>
            <person name="Todo K."/>
            <person name="Ohshima K."/>
            <person name="Toh H."/>
            <person name="Miyamoto K."/>
            <person name="Kuhara S."/>
            <person name="Hattori M."/>
            <person name="Shimizu T."/>
            <person name="Akimoto S."/>
        </authorList>
    </citation>
    <scope>NUCLEOTIDE SEQUENCE [LARGE SCALE GENOMIC DNA]</scope>
    <source>
        <strain>ATCC 29328 / DSM 20472 / WAL 2508</strain>
    </source>
</reference>
<sequence length="510" mass="57610">MKHQLVIVVDFGGQYNQLIARRVRDLNVYCEVVPYKKALDVIKEKQPIGIIFTGGPNSVYEENSPQIEKEIFELNIPILGMCYGMQLISKDFGGVVEKAKNREFGKTNAKISNQSSILKGMSDESIVWMSHTDFVSEKPEGFDIIQTTDSCPVAAIANEDKKIFAVQYHPEVNHTVEGKTLIKNFLYEICKADGDWTMENFLEEQIQKIRKTVGDKKVLLALSGGVDSSVCAALLSRAIGKNLTCVFVDHGLMRKNEGDEVEAAFKNDELNFVRVNAKDRFLNKLKGVSDPEQKRKIIGEEFIRVFEDEAKKIGSVDFLAQGTIYPDVIESGQGDASVIKSHHNVGGLPDVVDFKDLIEPLRDLFKDEVRRLGLELEMPEYLVYRQPFPGPGLGIRVMGEITEEKLEVLREADFIFRDEVAKAGIDKDINQYFAVITNNRTVGVMGDFRTYDYTLALRAVTTTDFMTADWARIPYEVLDKTSVRIINEVDHINRIVYDITSKPPATIEWE</sequence>
<proteinExistence type="inferred from homology"/>
<protein>
    <recommendedName>
        <fullName evidence="1">GMP synthase [glutamine-hydrolyzing]</fullName>
        <ecNumber evidence="1">6.3.5.2</ecNumber>
    </recommendedName>
    <alternativeName>
        <fullName evidence="1">GMP synthetase</fullName>
    </alternativeName>
    <alternativeName>
        <fullName evidence="1">Glutamine amidotransferase</fullName>
    </alternativeName>
</protein>
<dbReference type="EC" id="6.3.5.2" evidence="1"/>
<dbReference type="EMBL" id="AP008971">
    <property type="protein sequence ID" value="BAG07732.1"/>
    <property type="molecule type" value="Genomic_DNA"/>
</dbReference>
<dbReference type="RefSeq" id="WP_012290322.1">
    <property type="nucleotide sequence ID" value="NC_010376.1"/>
</dbReference>
<dbReference type="SMR" id="B0S0S7"/>
<dbReference type="STRING" id="334413.FMG_0314"/>
<dbReference type="MEROPS" id="C26.957"/>
<dbReference type="KEGG" id="fma:FMG_0314"/>
<dbReference type="eggNOG" id="COG0518">
    <property type="taxonomic scope" value="Bacteria"/>
</dbReference>
<dbReference type="eggNOG" id="COG0519">
    <property type="taxonomic scope" value="Bacteria"/>
</dbReference>
<dbReference type="HOGENOM" id="CLU_014340_0_5_9"/>
<dbReference type="UniPathway" id="UPA00189">
    <property type="reaction ID" value="UER00296"/>
</dbReference>
<dbReference type="Proteomes" id="UP000001319">
    <property type="component" value="Chromosome"/>
</dbReference>
<dbReference type="GO" id="GO:0005829">
    <property type="term" value="C:cytosol"/>
    <property type="evidence" value="ECO:0007669"/>
    <property type="project" value="TreeGrafter"/>
</dbReference>
<dbReference type="GO" id="GO:0005524">
    <property type="term" value="F:ATP binding"/>
    <property type="evidence" value="ECO:0007669"/>
    <property type="project" value="UniProtKB-UniRule"/>
</dbReference>
<dbReference type="GO" id="GO:0003921">
    <property type="term" value="F:GMP synthase activity"/>
    <property type="evidence" value="ECO:0007669"/>
    <property type="project" value="InterPro"/>
</dbReference>
<dbReference type="CDD" id="cd01742">
    <property type="entry name" value="GATase1_GMP_Synthase"/>
    <property type="match status" value="1"/>
</dbReference>
<dbReference type="CDD" id="cd01997">
    <property type="entry name" value="GMP_synthase_C"/>
    <property type="match status" value="1"/>
</dbReference>
<dbReference type="FunFam" id="3.30.300.10:FF:000002">
    <property type="entry name" value="GMP synthase [glutamine-hydrolyzing]"/>
    <property type="match status" value="1"/>
</dbReference>
<dbReference type="FunFam" id="3.40.50.620:FF:000001">
    <property type="entry name" value="GMP synthase [glutamine-hydrolyzing]"/>
    <property type="match status" value="1"/>
</dbReference>
<dbReference type="FunFam" id="3.40.50.880:FF:000001">
    <property type="entry name" value="GMP synthase [glutamine-hydrolyzing]"/>
    <property type="match status" value="1"/>
</dbReference>
<dbReference type="Gene3D" id="3.30.300.10">
    <property type="match status" value="1"/>
</dbReference>
<dbReference type="Gene3D" id="3.40.50.880">
    <property type="match status" value="1"/>
</dbReference>
<dbReference type="Gene3D" id="3.40.50.620">
    <property type="entry name" value="HUPs"/>
    <property type="match status" value="1"/>
</dbReference>
<dbReference type="HAMAP" id="MF_00344">
    <property type="entry name" value="GMP_synthase"/>
    <property type="match status" value="1"/>
</dbReference>
<dbReference type="InterPro" id="IPR029062">
    <property type="entry name" value="Class_I_gatase-like"/>
</dbReference>
<dbReference type="InterPro" id="IPR017926">
    <property type="entry name" value="GATASE"/>
</dbReference>
<dbReference type="InterPro" id="IPR001674">
    <property type="entry name" value="GMP_synth_C"/>
</dbReference>
<dbReference type="InterPro" id="IPR004739">
    <property type="entry name" value="GMP_synth_GATase"/>
</dbReference>
<dbReference type="InterPro" id="IPR022955">
    <property type="entry name" value="GMP_synthase"/>
</dbReference>
<dbReference type="InterPro" id="IPR025777">
    <property type="entry name" value="GMPS_ATP_PPase_dom"/>
</dbReference>
<dbReference type="InterPro" id="IPR022310">
    <property type="entry name" value="NAD/GMP_synthase"/>
</dbReference>
<dbReference type="InterPro" id="IPR014729">
    <property type="entry name" value="Rossmann-like_a/b/a_fold"/>
</dbReference>
<dbReference type="NCBIfam" id="TIGR00884">
    <property type="entry name" value="guaA_Cterm"/>
    <property type="match status" value="1"/>
</dbReference>
<dbReference type="NCBIfam" id="TIGR00888">
    <property type="entry name" value="guaA_Nterm"/>
    <property type="match status" value="1"/>
</dbReference>
<dbReference type="NCBIfam" id="NF000848">
    <property type="entry name" value="PRK00074.1"/>
    <property type="match status" value="1"/>
</dbReference>
<dbReference type="PANTHER" id="PTHR11922:SF2">
    <property type="entry name" value="GMP SYNTHASE [GLUTAMINE-HYDROLYZING]"/>
    <property type="match status" value="1"/>
</dbReference>
<dbReference type="PANTHER" id="PTHR11922">
    <property type="entry name" value="GMP SYNTHASE-RELATED"/>
    <property type="match status" value="1"/>
</dbReference>
<dbReference type="Pfam" id="PF00117">
    <property type="entry name" value="GATase"/>
    <property type="match status" value="1"/>
</dbReference>
<dbReference type="Pfam" id="PF00958">
    <property type="entry name" value="GMP_synt_C"/>
    <property type="match status" value="1"/>
</dbReference>
<dbReference type="Pfam" id="PF02540">
    <property type="entry name" value="NAD_synthase"/>
    <property type="match status" value="1"/>
</dbReference>
<dbReference type="PRINTS" id="PR00099">
    <property type="entry name" value="CPSGATASE"/>
</dbReference>
<dbReference type="PRINTS" id="PR00096">
    <property type="entry name" value="GATASE"/>
</dbReference>
<dbReference type="SUPFAM" id="SSF52402">
    <property type="entry name" value="Adenine nucleotide alpha hydrolases-like"/>
    <property type="match status" value="1"/>
</dbReference>
<dbReference type="SUPFAM" id="SSF52317">
    <property type="entry name" value="Class I glutamine amidotransferase-like"/>
    <property type="match status" value="1"/>
</dbReference>
<dbReference type="PROSITE" id="PS51273">
    <property type="entry name" value="GATASE_TYPE_1"/>
    <property type="match status" value="1"/>
</dbReference>
<dbReference type="PROSITE" id="PS51553">
    <property type="entry name" value="GMPS_ATP_PPASE"/>
    <property type="match status" value="1"/>
</dbReference>